<dbReference type="EC" id="1.3.99.-"/>
<dbReference type="EMBL" id="AE016958">
    <property type="protein sequence ID" value="AAS03870.1"/>
    <property type="molecule type" value="Genomic_DNA"/>
</dbReference>
<dbReference type="SMR" id="Q73ZP8"/>
<dbReference type="STRING" id="262316.MAP_1553c"/>
<dbReference type="KEGG" id="mpa:MAP_1553c"/>
<dbReference type="eggNOG" id="COG1960">
    <property type="taxonomic scope" value="Bacteria"/>
</dbReference>
<dbReference type="HOGENOM" id="CLU_709451_0_0_11"/>
<dbReference type="UniPathway" id="UPA00011"/>
<dbReference type="Proteomes" id="UP000000580">
    <property type="component" value="Chromosome"/>
</dbReference>
<dbReference type="GO" id="GO:0005737">
    <property type="term" value="C:cytoplasm"/>
    <property type="evidence" value="ECO:0007669"/>
    <property type="project" value="TreeGrafter"/>
</dbReference>
<dbReference type="GO" id="GO:0003995">
    <property type="term" value="F:acyl-CoA dehydrogenase activity"/>
    <property type="evidence" value="ECO:0007669"/>
    <property type="project" value="TreeGrafter"/>
</dbReference>
<dbReference type="GO" id="GO:0050660">
    <property type="term" value="F:flavin adenine dinucleotide binding"/>
    <property type="evidence" value="ECO:0007669"/>
    <property type="project" value="InterPro"/>
</dbReference>
<dbReference type="GO" id="GO:0033539">
    <property type="term" value="P:fatty acid beta-oxidation using acyl-CoA dehydrogenase"/>
    <property type="evidence" value="ECO:0007669"/>
    <property type="project" value="TreeGrafter"/>
</dbReference>
<dbReference type="Gene3D" id="1.10.540.10">
    <property type="entry name" value="Acyl-CoA dehydrogenase/oxidase, N-terminal domain"/>
    <property type="match status" value="1"/>
</dbReference>
<dbReference type="Gene3D" id="2.40.110.10">
    <property type="entry name" value="Butyryl-CoA Dehydrogenase, subunit A, domain 2"/>
    <property type="match status" value="1"/>
</dbReference>
<dbReference type="Gene3D" id="1.20.140.10">
    <property type="entry name" value="Butyryl-CoA Dehydrogenase, subunit A, domain 3"/>
    <property type="match status" value="1"/>
</dbReference>
<dbReference type="InterPro" id="IPR050741">
    <property type="entry name" value="Acyl-CoA_dehydrogenase"/>
</dbReference>
<dbReference type="InterPro" id="IPR006091">
    <property type="entry name" value="Acyl-CoA_Oxase/DH_mid-dom"/>
</dbReference>
<dbReference type="InterPro" id="IPR046373">
    <property type="entry name" value="Acyl-CoA_Oxase/DH_mid-dom_sf"/>
</dbReference>
<dbReference type="InterPro" id="IPR036250">
    <property type="entry name" value="AcylCo_DH-like_C"/>
</dbReference>
<dbReference type="InterPro" id="IPR009075">
    <property type="entry name" value="AcylCo_DH/oxidase_C"/>
</dbReference>
<dbReference type="InterPro" id="IPR013786">
    <property type="entry name" value="AcylCoA_DH/ox_N"/>
</dbReference>
<dbReference type="InterPro" id="IPR037069">
    <property type="entry name" value="AcylCoA_DH/ox_N_sf"/>
</dbReference>
<dbReference type="InterPro" id="IPR009100">
    <property type="entry name" value="AcylCoA_DH/oxidase_NM_dom_sf"/>
</dbReference>
<dbReference type="NCBIfam" id="NF037942">
    <property type="entry name" value="ac_ACP_DH_MbtN"/>
    <property type="match status" value="1"/>
</dbReference>
<dbReference type="PANTHER" id="PTHR48083:SF20">
    <property type="entry name" value="LONG-CHAIN SPECIFIC ACYL-COA DEHYDROGENASE, MITOCHONDRIAL"/>
    <property type="match status" value="1"/>
</dbReference>
<dbReference type="PANTHER" id="PTHR48083">
    <property type="entry name" value="MEDIUM-CHAIN SPECIFIC ACYL-COA DEHYDROGENASE, MITOCHONDRIAL-RELATED"/>
    <property type="match status" value="1"/>
</dbReference>
<dbReference type="Pfam" id="PF00441">
    <property type="entry name" value="Acyl-CoA_dh_1"/>
    <property type="match status" value="1"/>
</dbReference>
<dbReference type="Pfam" id="PF02770">
    <property type="entry name" value="Acyl-CoA_dh_M"/>
    <property type="match status" value="1"/>
</dbReference>
<dbReference type="Pfam" id="PF02771">
    <property type="entry name" value="Acyl-CoA_dh_N"/>
    <property type="match status" value="1"/>
</dbReference>
<dbReference type="SUPFAM" id="SSF47203">
    <property type="entry name" value="Acyl-CoA dehydrogenase C-terminal domain-like"/>
    <property type="match status" value="1"/>
</dbReference>
<dbReference type="SUPFAM" id="SSF56645">
    <property type="entry name" value="Acyl-CoA dehydrogenase NM domain-like"/>
    <property type="match status" value="1"/>
</dbReference>
<accession>Q73ZP8</accession>
<organism>
    <name type="scientific">Mycolicibacterium paratuberculosis (strain ATCC BAA-968 / K-10)</name>
    <name type="common">Mycobacterium paratuberculosis</name>
    <dbReference type="NCBI Taxonomy" id="262316"/>
    <lineage>
        <taxon>Bacteria</taxon>
        <taxon>Bacillati</taxon>
        <taxon>Actinomycetota</taxon>
        <taxon>Actinomycetes</taxon>
        <taxon>Mycobacteriales</taxon>
        <taxon>Mycobacteriaceae</taxon>
        <taxon>Mycobacterium</taxon>
        <taxon>Mycobacterium avium complex (MAC)</taxon>
    </lineage>
</organism>
<comment type="function">
    <text evidence="1">Catalyzes the dehydrogenation at the alpha-beta position of ACP-bound acyl chains. This results in the introduction of a double bond in the lipidic chain, which is further transferred to the epsilon-amino group of lysine residue in the mycobactin core by MbtK (By similarity).</text>
</comment>
<comment type="cofactor">
    <cofactor evidence="1">
        <name>FAD</name>
        <dbReference type="ChEBI" id="CHEBI:57692"/>
    </cofactor>
</comment>
<comment type="pathway">
    <text>Siderophore biosynthesis; mycobactin biosynthesis.</text>
</comment>
<comment type="similarity">
    <text evidence="2">Belongs to the acyl-CoA dehydrogenase family.</text>
</comment>
<feature type="chain" id="PRO_0000278306" description="Acyl-[acyl-carrier-protein] dehydrogenase MbtN">
    <location>
        <begin position="1"/>
        <end position="388"/>
    </location>
</feature>
<proteinExistence type="inferred from homology"/>
<name>MBTN_MYCPA</name>
<protein>
    <recommendedName>
        <fullName>Acyl-[acyl-carrier-protein] dehydrogenase MbtN</fullName>
        <shortName>Acyl-ACP dehydrogenase MbtN</shortName>
        <ecNumber>1.3.99.-</ecNumber>
    </recommendedName>
    <alternativeName>
        <fullName>Mycobactin synthase protein N</fullName>
    </alternativeName>
</protein>
<gene>
    <name type="primary">mbtN</name>
    <name type="synonym">fadE14</name>
    <name type="ordered locus">MAP_1553c</name>
</gene>
<evidence type="ECO:0000250" key="1"/>
<evidence type="ECO:0000305" key="2"/>
<reference key="1">
    <citation type="journal article" date="2005" name="Proc. Natl. Acad. Sci. U.S.A.">
        <title>The complete genome sequence of Mycobacterium avium subspecies paratuberculosis.</title>
        <authorList>
            <person name="Li L."/>
            <person name="Bannantine J.P."/>
            <person name="Zhang Q."/>
            <person name="Amonsin A."/>
            <person name="May B.J."/>
            <person name="Alt D."/>
            <person name="Banerji N."/>
            <person name="Kanjilal S."/>
            <person name="Kapur V."/>
        </authorList>
    </citation>
    <scope>NUCLEOTIDE SEQUENCE [LARGE SCALE GENOMIC DNA]</scope>
    <source>
        <strain>ATCC BAA-968 / K-10</strain>
    </source>
</reference>
<sequence length="388" mass="41370">MSAATTADIDHYRTVLAGAFDDQVLEWTREAEARQRFPRELIEHLGARGVFSEKWCGGMLPDVGKLVELARALGRLSSAGIGVGVSLHDSAIAVLRRFGKSDYLRDICERAIAGQAVLCIGASEESGGSDLQIVRTEMSSRDGGFDIRGVKKFVSLSPIADHIMVVARSIDHDSASKHGNVALIAVPTSQASVQRPYAKVGAGPLDTAAVHIDTWVPADALVARAGTGLAAISWGLAHERMSIAGQIAASCQRAIGITLARMMTRRQFGRTLFEHQALRLRMADLQARVDLLQHGLNGIAAQGRLDLRAAAGVKVTAARLGEEVMSECMHIFGGAGYLVEETPLGRWWRDMKLARVGGGTDEVLWELVAAGMAADHGGYRSVVGASSA</sequence>
<keyword id="KW-0274">FAD</keyword>
<keyword id="KW-0285">Flavoprotein</keyword>
<keyword id="KW-0560">Oxidoreductase</keyword>
<keyword id="KW-1185">Reference proteome</keyword>